<feature type="transit peptide" description="Chloroplast" evidence="5">
    <location>
        <begin position="1"/>
        <end position="70"/>
    </location>
</feature>
<feature type="chain" id="PRO_0000348952" description="Bifunctional levopimaradiene synthase, chloroplastic">
    <location>
        <begin position="71"/>
        <end position="859"/>
    </location>
</feature>
<feature type="short sequence motif" description="DXDD motif" evidence="7">
    <location>
        <begin position="392"/>
        <end position="395"/>
    </location>
</feature>
<feature type="short sequence motif" description="DDXXD motif" evidence="7">
    <location>
        <begin position="611"/>
        <end position="615"/>
    </location>
</feature>
<feature type="binding site" evidence="3">
    <location>
        <position position="259"/>
    </location>
    <ligand>
        <name>substrate</name>
    </ligand>
</feature>
<feature type="binding site" evidence="2">
    <location>
        <position position="392"/>
    </location>
    <ligand>
        <name>Mg(2+)</name>
        <dbReference type="ChEBI" id="CHEBI:18420"/>
        <label>4</label>
    </ligand>
</feature>
<feature type="binding site" evidence="2">
    <location>
        <position position="394"/>
    </location>
    <ligand>
        <name>Mg(2+)</name>
        <dbReference type="ChEBI" id="CHEBI:18420"/>
        <label>4</label>
    </ligand>
</feature>
<feature type="binding site" evidence="3">
    <location>
        <position position="479"/>
    </location>
    <ligand>
        <name>substrate</name>
    </ligand>
</feature>
<feature type="binding site" evidence="4">
    <location>
        <position position="611"/>
    </location>
    <ligand>
        <name>Mg(2+)</name>
        <dbReference type="ChEBI" id="CHEBI:18420"/>
        <label>1</label>
    </ligand>
</feature>
<feature type="binding site" evidence="4">
    <location>
        <position position="611"/>
    </location>
    <ligand>
        <name>Mg(2+)</name>
        <dbReference type="ChEBI" id="CHEBI:18420"/>
        <label>2</label>
    </ligand>
</feature>
<feature type="binding site" evidence="4">
    <location>
        <position position="615"/>
    </location>
    <ligand>
        <name>Mg(2+)</name>
        <dbReference type="ChEBI" id="CHEBI:18420"/>
        <label>1</label>
    </ligand>
</feature>
<feature type="binding site" evidence="4">
    <location>
        <position position="615"/>
    </location>
    <ligand>
        <name>Mg(2+)</name>
        <dbReference type="ChEBI" id="CHEBI:18420"/>
        <label>2</label>
    </ligand>
</feature>
<feature type="binding site" evidence="4">
    <location>
        <position position="755"/>
    </location>
    <ligand>
        <name>Mg(2+)</name>
        <dbReference type="ChEBI" id="CHEBI:18420"/>
        <label>3</label>
    </ligand>
</feature>
<feature type="binding site" evidence="4">
    <location>
        <position position="759"/>
    </location>
    <ligand>
        <name>Mg(2+)</name>
        <dbReference type="ChEBI" id="CHEBI:18420"/>
        <label>3</label>
    </ligand>
</feature>
<feature type="binding site" evidence="4">
    <location>
        <position position="763"/>
    </location>
    <ligand>
        <name>Mg(2+)</name>
        <dbReference type="ChEBI" id="CHEBI:18420"/>
        <label>3</label>
    </ligand>
</feature>
<proteinExistence type="evidence at transcript level"/>
<comment type="function">
    <text evidence="1 6">Involved in defensive oleoresin formation in conifers in response to insect attack or other injury (By similarity). Involved in diterpene (C20) olefins biosynthesis. Bifunctional enzyme that catalyzes two sequential cyclizations of geranylgeranyl diphosphate (GGPP) to levopimaradiene. Levopimaradiene is the major products of the enzyme followed by abietadiene, neoabietadiene and palustradiene.</text>
</comment>
<comment type="catalytic activity">
    <reaction>
        <text>(2E,6E,10E)-geranylgeranyl diphosphate = (+)-copalyl diphosphate</text>
        <dbReference type="Rhea" id="RHEA:24316"/>
        <dbReference type="ChEBI" id="CHEBI:58635"/>
        <dbReference type="ChEBI" id="CHEBI:58756"/>
        <dbReference type="EC" id="5.5.1.12"/>
    </reaction>
</comment>
<comment type="catalytic activity">
    <reaction>
        <text>(+)-copalyl diphosphate = abieta-8(14),12-diene + diphosphate</text>
        <dbReference type="Rhea" id="RHEA:25548"/>
        <dbReference type="ChEBI" id="CHEBI:29616"/>
        <dbReference type="ChEBI" id="CHEBI:33019"/>
        <dbReference type="ChEBI" id="CHEBI:58635"/>
        <dbReference type="EC" id="4.2.3.32"/>
    </reaction>
</comment>
<comment type="cofactor">
    <cofactor evidence="4">
        <name>Mg(2+)</name>
        <dbReference type="ChEBI" id="CHEBI:18420"/>
    </cofactor>
    <text evidence="4">Binds 3 Mg(2+) ions per subunit.</text>
</comment>
<comment type="pathway">
    <text>Terpene metabolism; oleoresin biosynthesis.</text>
</comment>
<comment type="subcellular location">
    <subcellularLocation>
        <location evidence="1">Plastid</location>
        <location evidence="1">Chloroplast</location>
    </subcellularLocation>
</comment>
<comment type="domain">
    <text evidence="7">The Asp-Xaa-Asp-Asp (DXDD) motif is important for the catalytic activity in the class II active site relevant for the cyclization of GGPP. The Asp-Asp-Xaa-Xaa-Asp/Glu (DDXXD/E) motif is important for the catalytic activity in the class I active site, presumably through binding to Mg(2+).</text>
</comment>
<comment type="similarity">
    <text evidence="7">Belongs to the terpene synthase family. Tpsd subfamily.</text>
</comment>
<name>TPSD1_PICAB</name>
<evidence type="ECO:0000250" key="1"/>
<evidence type="ECO:0000250" key="2">
    <source>
        <dbReference type="UniProtKB" id="C7BKP9"/>
    </source>
</evidence>
<evidence type="ECO:0000250" key="3">
    <source>
        <dbReference type="UniProtKB" id="Q38802"/>
    </source>
</evidence>
<evidence type="ECO:0000250" key="4">
    <source>
        <dbReference type="UniProtKB" id="Q40577"/>
    </source>
</evidence>
<evidence type="ECO:0000255" key="5"/>
<evidence type="ECO:0000269" key="6">
    <source>
    </source>
</evidence>
<evidence type="ECO:0000305" key="7"/>
<accession>Q675L4</accession>
<reference key="1">
    <citation type="journal article" date="2004" name="Plant Physiol.">
        <title>Functional characterization of nine Norway Spruce TPS genes and evolution of gymnosperm terpene synthases of the TPS-d subfamily.</title>
        <authorList>
            <person name="Martin D.M."/>
            <person name="Faeldt J."/>
            <person name="Bohlmann J."/>
        </authorList>
    </citation>
    <scope>NUCLEOTIDE SEQUENCE [MRNA]</scope>
    <scope>FUNCTION</scope>
    <scope>GENE FAMILY</scope>
    <scope>NOMENCLATURE</scope>
</reference>
<keyword id="KW-0150">Chloroplast</keyword>
<keyword id="KW-0413">Isomerase</keyword>
<keyword id="KW-0456">Lyase</keyword>
<keyword id="KW-0460">Magnesium</keyword>
<keyword id="KW-0479">Metal-binding</keyword>
<keyword id="KW-0511">Multifunctional enzyme</keyword>
<keyword id="KW-0611">Plant defense</keyword>
<keyword id="KW-0934">Plastid</keyword>
<keyword id="KW-0809">Transit peptide</keyword>
<dbReference type="EC" id="4.2.3.32"/>
<dbReference type="EC" id="5.5.1.12"/>
<dbReference type="EMBL" id="AY473621">
    <property type="protein sequence ID" value="AAS47691.1"/>
    <property type="molecule type" value="mRNA"/>
</dbReference>
<dbReference type="SMR" id="Q675L4"/>
<dbReference type="BioCyc" id="MetaCyc:MONOMER-12742"/>
<dbReference type="BRENDA" id="4.2.3.18">
    <property type="organism ID" value="4815"/>
</dbReference>
<dbReference type="BRENDA" id="4.2.3.32">
    <property type="organism ID" value="4815"/>
</dbReference>
<dbReference type="BRENDA" id="5.5.1.12">
    <property type="organism ID" value="4815"/>
</dbReference>
<dbReference type="UniPathway" id="UPA00924"/>
<dbReference type="GO" id="GO:0009507">
    <property type="term" value="C:chloroplast"/>
    <property type="evidence" value="ECO:0007669"/>
    <property type="project" value="UniProtKB-SubCell"/>
</dbReference>
<dbReference type="GO" id="GO:0050559">
    <property type="term" value="F:copalyl diphosphate synthase activity"/>
    <property type="evidence" value="ECO:0007669"/>
    <property type="project" value="UniProtKB-EC"/>
</dbReference>
<dbReference type="GO" id="GO:0052678">
    <property type="term" value="F:levopimaradiene synthase activity"/>
    <property type="evidence" value="ECO:0007669"/>
    <property type="project" value="UniProtKB-EC"/>
</dbReference>
<dbReference type="GO" id="GO:0000287">
    <property type="term" value="F:magnesium ion binding"/>
    <property type="evidence" value="ECO:0007669"/>
    <property type="project" value="InterPro"/>
</dbReference>
<dbReference type="GO" id="GO:0010333">
    <property type="term" value="F:terpene synthase activity"/>
    <property type="evidence" value="ECO:0007669"/>
    <property type="project" value="InterPro"/>
</dbReference>
<dbReference type="GO" id="GO:0006952">
    <property type="term" value="P:defense response"/>
    <property type="evidence" value="ECO:0007669"/>
    <property type="project" value="UniProtKB-KW"/>
</dbReference>
<dbReference type="GO" id="GO:0016102">
    <property type="term" value="P:diterpenoid biosynthetic process"/>
    <property type="evidence" value="ECO:0007669"/>
    <property type="project" value="InterPro"/>
</dbReference>
<dbReference type="CDD" id="cd00684">
    <property type="entry name" value="Terpene_cyclase_plant_C1"/>
    <property type="match status" value="1"/>
</dbReference>
<dbReference type="FunFam" id="1.50.10.130:FF:000002">
    <property type="entry name" value="Ent-copalyl diphosphate synthase, chloroplastic"/>
    <property type="match status" value="1"/>
</dbReference>
<dbReference type="FunFam" id="1.10.600.10:FF:000005">
    <property type="entry name" value="Ent-kaur-16-ene synthase, chloroplastic"/>
    <property type="match status" value="1"/>
</dbReference>
<dbReference type="Gene3D" id="1.50.10.160">
    <property type="match status" value="1"/>
</dbReference>
<dbReference type="Gene3D" id="1.10.600.10">
    <property type="entry name" value="Farnesyl Diphosphate Synthase"/>
    <property type="match status" value="1"/>
</dbReference>
<dbReference type="Gene3D" id="1.50.10.130">
    <property type="entry name" value="Terpene synthase, N-terminal domain"/>
    <property type="match status" value="1"/>
</dbReference>
<dbReference type="InterPro" id="IPR008949">
    <property type="entry name" value="Isoprenoid_synthase_dom_sf"/>
</dbReference>
<dbReference type="InterPro" id="IPR034741">
    <property type="entry name" value="Terpene_cyclase-like_1_C"/>
</dbReference>
<dbReference type="InterPro" id="IPR044814">
    <property type="entry name" value="Terpene_cyclase_plant_C1"/>
</dbReference>
<dbReference type="InterPro" id="IPR001906">
    <property type="entry name" value="Terpene_synth_N"/>
</dbReference>
<dbReference type="InterPro" id="IPR036965">
    <property type="entry name" value="Terpene_synth_N_sf"/>
</dbReference>
<dbReference type="InterPro" id="IPR050148">
    <property type="entry name" value="Terpene_synthase-like"/>
</dbReference>
<dbReference type="InterPro" id="IPR005630">
    <property type="entry name" value="Terpene_synthase_metal-bd"/>
</dbReference>
<dbReference type="InterPro" id="IPR008930">
    <property type="entry name" value="Terpenoid_cyclase/PrenylTrfase"/>
</dbReference>
<dbReference type="PANTHER" id="PTHR31739:SF25">
    <property type="entry name" value="(E,E)-GERANYLLINALOOL SYNTHASE"/>
    <property type="match status" value="1"/>
</dbReference>
<dbReference type="PANTHER" id="PTHR31739">
    <property type="entry name" value="ENT-COPALYL DIPHOSPHATE SYNTHASE, CHLOROPLASTIC"/>
    <property type="match status" value="1"/>
</dbReference>
<dbReference type="Pfam" id="PF01397">
    <property type="entry name" value="Terpene_synth"/>
    <property type="match status" value="1"/>
</dbReference>
<dbReference type="Pfam" id="PF03936">
    <property type="entry name" value="Terpene_synth_C"/>
    <property type="match status" value="1"/>
</dbReference>
<dbReference type="SFLD" id="SFLDS00005">
    <property type="entry name" value="Isoprenoid_Synthase_Type_I"/>
    <property type="match status" value="1"/>
</dbReference>
<dbReference type="SFLD" id="SFLDG01019">
    <property type="entry name" value="Terpene_Cyclase_Like_1_C_Termi"/>
    <property type="match status" value="1"/>
</dbReference>
<dbReference type="SFLD" id="SFLDG01014">
    <property type="entry name" value="Terpene_Cyclase_Like_1_N-term"/>
    <property type="match status" value="1"/>
</dbReference>
<dbReference type="SFLD" id="SFLDG01605">
    <property type="entry name" value="Terpene_Cyclase_Like_1_N-term"/>
    <property type="match status" value="1"/>
</dbReference>
<dbReference type="SUPFAM" id="SSF48239">
    <property type="entry name" value="Terpenoid cyclases/Protein prenyltransferases"/>
    <property type="match status" value="2"/>
</dbReference>
<dbReference type="SUPFAM" id="SSF48576">
    <property type="entry name" value="Terpenoid synthases"/>
    <property type="match status" value="1"/>
</dbReference>
<protein>
    <recommendedName>
        <fullName>Bifunctional levopimaradiene synthase, chloroplastic</fullName>
    </recommendedName>
    <alternativeName>
        <fullName>Diterpene synthase</fullName>
    </alternativeName>
    <alternativeName>
        <fullName>PaTPS-LAS</fullName>
    </alternativeName>
    <domain>
        <recommendedName>
            <fullName>Levopimaradiene synthase</fullName>
            <ecNumber>4.2.3.32</ecNumber>
        </recommendedName>
    </domain>
    <domain>
        <recommendedName>
            <fullName>Copalyl diphosphate synthase</fullName>
            <ecNumber>5.5.1.12</ecNumber>
        </recommendedName>
    </domain>
</protein>
<organism>
    <name type="scientific">Picea abies</name>
    <name type="common">Norway spruce</name>
    <name type="synonym">Picea excelsa</name>
    <dbReference type="NCBI Taxonomy" id="3329"/>
    <lineage>
        <taxon>Eukaryota</taxon>
        <taxon>Viridiplantae</taxon>
        <taxon>Streptophyta</taxon>
        <taxon>Embryophyta</taxon>
        <taxon>Tracheophyta</taxon>
        <taxon>Spermatophyta</taxon>
        <taxon>Pinopsida</taxon>
        <taxon>Pinidae</taxon>
        <taxon>Conifers I</taxon>
        <taxon>Pinales</taxon>
        <taxon>Pinaceae</taxon>
        <taxon>Picea</taxon>
    </lineage>
</organism>
<gene>
    <name type="primary">TPS-LAS</name>
</gene>
<sequence>MALLSSSLSSQIPTGAHHLTLNAYANTQCIPHFFSTLNAGTSAGKRSSLYLRWGKGSNKIIACVGEDSLSAPTLVKREFPPGFWKDHVIDSLTSSHKVAASDEKRIETLISEIKNMFRSMGYGDTNPSAYDTAWVARIPAVDGSEQPEFPETLEWILQNQLKDGSWGEGFYFLAYDRILATLACIITLTLWRTGEIQVQKGIEFFKTQAGKIEDEADSHRPSGFEIVFPAMLKEAKVLGLDLPYELPFIKQIIEKREAKLERLPTNILYALPTTLLYSLEGLQEIVDWQKIIKLQSKDGSFLSSPASTAAVFMRTGNKKCLEFLNFVLKKFGNHVPCHYPLDLFERLWAVDTIERLGIDRHFKEEIKDALDYVYSHWDERGIGWARENPVPDIDDTAMGLRILRLHGYNVSSDVLKTFRDENGEFFCFLGQTQRGVTDMLNVNRCSHVAFPGETIMEEAKTCTERYLRNALEDVGAFDKWALKKNIRGEVEYALKYPWHRSMPRLEARSYIEHYGPNDVWLGKTMYMMPYISNEKYLELAKLDFNHVQSLHQKELRDLRRWWTSSGFTELKFTRERVTEIYFSPASFMFEPEFATCRAVYTKTSNFTVILDDLYDAHGTLDDLKLFSDSVKKWDLSLVDRMPQDMKICFMGFYNTFNEIAEEGRKRQGRDVLGYIRNVWEIQLEAYTKEAEWSAARYVPSFDEYIDNASVSIALGTVVLISALFTGEILTDDVLSKIGRGSRFLQLMGLTGRLVNDTKTYEAERGQGEVASAVQCYMKDHPEISEEEALKHVYTVMENALDELNREFVNNREVPDSCRRLVFETARIMQLFYMDGDGLTLSHETEIKEHVKNCLFQPVA</sequence>